<gene>
    <name type="ordered locus">HI_0680</name>
</gene>
<feature type="chain" id="PRO_0000108159" description="Uncharacterized transporter HI_0680">
    <location>
        <begin position="1"/>
        <end position="298"/>
    </location>
</feature>
<feature type="transmembrane region" description="Helical" evidence="1">
    <location>
        <begin position="5"/>
        <end position="23"/>
    </location>
</feature>
<feature type="transmembrane region" description="Helical" evidence="1">
    <location>
        <begin position="33"/>
        <end position="52"/>
    </location>
</feature>
<feature type="transmembrane region" description="Helical" evidence="1">
    <location>
        <begin position="72"/>
        <end position="91"/>
    </location>
</feature>
<feature type="transmembrane region" description="Helical" evidence="1">
    <location>
        <begin position="101"/>
        <end position="120"/>
    </location>
</feature>
<feature type="transmembrane region" description="Helical" evidence="1">
    <location>
        <begin position="127"/>
        <end position="145"/>
    </location>
</feature>
<feature type="transmembrane region" description="Helical" evidence="1">
    <location>
        <begin position="149"/>
        <end position="166"/>
    </location>
</feature>
<feature type="transmembrane region" description="Helical" evidence="1">
    <location>
        <begin position="175"/>
        <end position="194"/>
    </location>
</feature>
<feature type="transmembrane region" description="Helical" evidence="1">
    <location>
        <begin position="207"/>
        <end position="229"/>
    </location>
</feature>
<feature type="transmembrane region" description="Helical" evidence="1">
    <location>
        <begin position="238"/>
        <end position="260"/>
    </location>
</feature>
<feature type="transmembrane region" description="Helical" evidence="1">
    <location>
        <begin position="265"/>
        <end position="284"/>
    </location>
</feature>
<feature type="domain" description="EamA">
    <location>
        <begin position="13"/>
        <end position="144"/>
    </location>
</feature>
<dbReference type="EMBL" id="L42023">
    <property type="protein sequence ID" value="AAC22339.1"/>
    <property type="molecule type" value="Genomic_DNA"/>
</dbReference>
<dbReference type="PIR" id="I64085">
    <property type="entry name" value="I64085"/>
</dbReference>
<dbReference type="RefSeq" id="NP_438840.1">
    <property type="nucleotide sequence ID" value="NC_000907.1"/>
</dbReference>
<dbReference type="STRING" id="71421.HI_0680"/>
<dbReference type="TCDB" id="2.A.7.7.3">
    <property type="family name" value="the drug/metabolite transporter (dmt) superfamily"/>
</dbReference>
<dbReference type="EnsemblBacteria" id="AAC22339">
    <property type="protein sequence ID" value="AAC22339"/>
    <property type="gene ID" value="HI_0680"/>
</dbReference>
<dbReference type="KEGG" id="hin:HI_0680"/>
<dbReference type="PATRIC" id="fig|71421.8.peg.711"/>
<dbReference type="eggNOG" id="COG2962">
    <property type="taxonomic scope" value="Bacteria"/>
</dbReference>
<dbReference type="HOGENOM" id="CLU_054508_2_0_6"/>
<dbReference type="OrthoDB" id="3250831at2"/>
<dbReference type="PhylomeDB" id="Q57389"/>
<dbReference type="BioCyc" id="HINF71421:G1GJ1-715-MONOMER"/>
<dbReference type="Proteomes" id="UP000000579">
    <property type="component" value="Chromosome"/>
</dbReference>
<dbReference type="GO" id="GO:0005886">
    <property type="term" value="C:plasma membrane"/>
    <property type="evidence" value="ECO:0000318"/>
    <property type="project" value="GO_Central"/>
</dbReference>
<dbReference type="InterPro" id="IPR000620">
    <property type="entry name" value="EamA_dom"/>
</dbReference>
<dbReference type="InterPro" id="IPR004626">
    <property type="entry name" value="RarD"/>
</dbReference>
<dbReference type="NCBIfam" id="TIGR00688">
    <property type="entry name" value="rarD"/>
    <property type="match status" value="1"/>
</dbReference>
<dbReference type="Pfam" id="PF00892">
    <property type="entry name" value="EamA"/>
    <property type="match status" value="1"/>
</dbReference>
<dbReference type="SUPFAM" id="SSF103481">
    <property type="entry name" value="Multidrug resistance efflux transporter EmrE"/>
    <property type="match status" value="1"/>
</dbReference>
<evidence type="ECO:0000255" key="1"/>
<evidence type="ECO:0000305" key="2"/>
<reference key="1">
    <citation type="journal article" date="1995" name="Science">
        <title>Whole-genome random sequencing and assembly of Haemophilus influenzae Rd.</title>
        <authorList>
            <person name="Fleischmann R.D."/>
            <person name="Adams M.D."/>
            <person name="White O."/>
            <person name="Clayton R.A."/>
            <person name="Kirkness E.F."/>
            <person name="Kerlavage A.R."/>
            <person name="Bult C.J."/>
            <person name="Tomb J.-F."/>
            <person name="Dougherty B.A."/>
            <person name="Merrick J.M."/>
            <person name="McKenney K."/>
            <person name="Sutton G.G."/>
            <person name="FitzHugh W."/>
            <person name="Fields C.A."/>
            <person name="Gocayne J.D."/>
            <person name="Scott J.D."/>
            <person name="Shirley R."/>
            <person name="Liu L.-I."/>
            <person name="Glodek A."/>
            <person name="Kelley J.M."/>
            <person name="Weidman J.F."/>
            <person name="Phillips C.A."/>
            <person name="Spriggs T."/>
            <person name="Hedblom E."/>
            <person name="Cotton M.D."/>
            <person name="Utterback T.R."/>
            <person name="Hanna M.C."/>
            <person name="Nguyen D.T."/>
            <person name="Saudek D.M."/>
            <person name="Brandon R.C."/>
            <person name="Fine L.D."/>
            <person name="Fritchman J.L."/>
            <person name="Fuhrmann J.L."/>
            <person name="Geoghagen N.S.M."/>
            <person name="Gnehm C.L."/>
            <person name="McDonald L.A."/>
            <person name="Small K.V."/>
            <person name="Fraser C.M."/>
            <person name="Smith H.O."/>
            <person name="Venter J.C."/>
        </authorList>
    </citation>
    <scope>NUCLEOTIDE SEQUENCE [LARGE SCALE GENOMIC DNA]</scope>
    <source>
        <strain>ATCC 51907 / DSM 11121 / KW20 / Rd</strain>
    </source>
</reference>
<comment type="subcellular location">
    <subcellularLocation>
        <location evidence="2">Cell membrane</location>
        <topology evidence="2">Multi-pass membrane protein</topology>
    </subcellularLocation>
</comment>
<comment type="similarity">
    <text evidence="2">Belongs to the EamA transporter family.</text>
</comment>
<protein>
    <recommendedName>
        <fullName>Uncharacterized transporter HI_0680</fullName>
    </recommendedName>
</protein>
<name>Y680_HAEIN</name>
<accession>Q57389</accession>
<accession>O05030</accession>
<sequence>MFKGILVSLLASFLFGYMYYFSTLLKPLSGTDIFGYRMIFTFPFVLLSVTLFKQKAALIERLKRIQKRPHLALSYLLCGLLMGFQMWLFLWAPNNGSSLSVSFGYLLLPIVMVAAGRVFFKERISTFKFIAVIIATLGVISNIVLKGGLSWEAIVICLGYTAYFSIRKALKNTDLASFCLEMLSLMPVSIYFALQTDFATVQQTNPFIWGXLVLLGLISGTALIAYVIASNMLPMNLLGLLGYVETIMMLCVSFLIGEQIDSESYPLFICLVIAMILVMVDGVYKHTQKEVYKCHLKK</sequence>
<proteinExistence type="inferred from homology"/>
<organism>
    <name type="scientific">Haemophilus influenzae (strain ATCC 51907 / DSM 11121 / KW20 / Rd)</name>
    <dbReference type="NCBI Taxonomy" id="71421"/>
    <lineage>
        <taxon>Bacteria</taxon>
        <taxon>Pseudomonadati</taxon>
        <taxon>Pseudomonadota</taxon>
        <taxon>Gammaproteobacteria</taxon>
        <taxon>Pasteurellales</taxon>
        <taxon>Pasteurellaceae</taxon>
        <taxon>Haemophilus</taxon>
    </lineage>
</organism>
<keyword id="KW-1003">Cell membrane</keyword>
<keyword id="KW-0472">Membrane</keyword>
<keyword id="KW-1185">Reference proteome</keyword>
<keyword id="KW-0812">Transmembrane</keyword>
<keyword id="KW-1133">Transmembrane helix</keyword>
<keyword id="KW-0813">Transport</keyword>